<feature type="chain" id="PRO_1000136508" description="Putative phosphoenolpyruvate synthase regulatory protein">
    <location>
        <begin position="1"/>
        <end position="273"/>
    </location>
</feature>
<feature type="binding site" evidence="1">
    <location>
        <begin position="153"/>
        <end position="160"/>
    </location>
    <ligand>
        <name>ADP</name>
        <dbReference type="ChEBI" id="CHEBI:456216"/>
    </ligand>
</feature>
<comment type="function">
    <text evidence="1">Bifunctional serine/threonine kinase and phosphorylase involved in the regulation of the phosphoenolpyruvate synthase (PEPS) by catalyzing its phosphorylation/dephosphorylation.</text>
</comment>
<comment type="catalytic activity">
    <reaction evidence="1">
        <text>[pyruvate, water dikinase] + ADP = [pyruvate, water dikinase]-phosphate + AMP + H(+)</text>
        <dbReference type="Rhea" id="RHEA:46020"/>
        <dbReference type="Rhea" id="RHEA-COMP:11425"/>
        <dbReference type="Rhea" id="RHEA-COMP:11426"/>
        <dbReference type="ChEBI" id="CHEBI:15378"/>
        <dbReference type="ChEBI" id="CHEBI:43176"/>
        <dbReference type="ChEBI" id="CHEBI:68546"/>
        <dbReference type="ChEBI" id="CHEBI:456215"/>
        <dbReference type="ChEBI" id="CHEBI:456216"/>
        <dbReference type="EC" id="2.7.11.33"/>
    </reaction>
</comment>
<comment type="catalytic activity">
    <reaction evidence="1">
        <text>[pyruvate, water dikinase]-phosphate + phosphate + H(+) = [pyruvate, water dikinase] + diphosphate</text>
        <dbReference type="Rhea" id="RHEA:48580"/>
        <dbReference type="Rhea" id="RHEA-COMP:11425"/>
        <dbReference type="Rhea" id="RHEA-COMP:11426"/>
        <dbReference type="ChEBI" id="CHEBI:15378"/>
        <dbReference type="ChEBI" id="CHEBI:33019"/>
        <dbReference type="ChEBI" id="CHEBI:43176"/>
        <dbReference type="ChEBI" id="CHEBI:43474"/>
        <dbReference type="ChEBI" id="CHEBI:68546"/>
        <dbReference type="EC" id="2.7.4.28"/>
    </reaction>
</comment>
<comment type="similarity">
    <text evidence="1">Belongs to the pyruvate, phosphate/water dikinase regulatory protein family. PSRP subfamily.</text>
</comment>
<name>PSRP_YERPY</name>
<dbReference type="EC" id="2.7.11.33" evidence="1"/>
<dbReference type="EC" id="2.7.4.28" evidence="1"/>
<dbReference type="EMBL" id="CP000950">
    <property type="protein sequence ID" value="ACA68133.1"/>
    <property type="molecule type" value="Genomic_DNA"/>
</dbReference>
<dbReference type="RefSeq" id="WP_002211814.1">
    <property type="nucleotide sequence ID" value="NZ_CP009792.1"/>
</dbReference>
<dbReference type="SMR" id="B1JJ39"/>
<dbReference type="KEGG" id="ypy:YPK_1842"/>
<dbReference type="PATRIC" id="fig|502800.11.peg.2512"/>
<dbReference type="GO" id="GO:0043531">
    <property type="term" value="F:ADP binding"/>
    <property type="evidence" value="ECO:0007669"/>
    <property type="project" value="UniProtKB-UniRule"/>
</dbReference>
<dbReference type="GO" id="GO:0005524">
    <property type="term" value="F:ATP binding"/>
    <property type="evidence" value="ECO:0007669"/>
    <property type="project" value="InterPro"/>
</dbReference>
<dbReference type="GO" id="GO:0003677">
    <property type="term" value="F:DNA binding"/>
    <property type="evidence" value="ECO:0007669"/>
    <property type="project" value="InterPro"/>
</dbReference>
<dbReference type="GO" id="GO:0016776">
    <property type="term" value="F:phosphotransferase activity, phosphate group as acceptor"/>
    <property type="evidence" value="ECO:0007669"/>
    <property type="project" value="UniProtKB-UniRule"/>
</dbReference>
<dbReference type="GO" id="GO:0004674">
    <property type="term" value="F:protein serine/threonine kinase activity"/>
    <property type="evidence" value="ECO:0007669"/>
    <property type="project" value="UniProtKB-UniRule"/>
</dbReference>
<dbReference type="GO" id="GO:0006355">
    <property type="term" value="P:regulation of DNA-templated transcription"/>
    <property type="evidence" value="ECO:0007669"/>
    <property type="project" value="InterPro"/>
</dbReference>
<dbReference type="HAMAP" id="MF_01062">
    <property type="entry name" value="PSRP"/>
    <property type="match status" value="1"/>
</dbReference>
<dbReference type="InterPro" id="IPR005177">
    <property type="entry name" value="Kinase-pyrophosphorylase"/>
</dbReference>
<dbReference type="InterPro" id="IPR026530">
    <property type="entry name" value="PSRP"/>
</dbReference>
<dbReference type="InterPro" id="IPR008917">
    <property type="entry name" value="TF_DNA-bd_sf"/>
</dbReference>
<dbReference type="NCBIfam" id="NF003742">
    <property type="entry name" value="PRK05339.1"/>
    <property type="match status" value="1"/>
</dbReference>
<dbReference type="PANTHER" id="PTHR31756">
    <property type="entry name" value="PYRUVATE, PHOSPHATE DIKINASE REGULATORY PROTEIN 1, CHLOROPLASTIC"/>
    <property type="match status" value="1"/>
</dbReference>
<dbReference type="PANTHER" id="PTHR31756:SF3">
    <property type="entry name" value="PYRUVATE, PHOSPHATE DIKINASE REGULATORY PROTEIN 1, CHLOROPLASTIC"/>
    <property type="match status" value="1"/>
</dbReference>
<dbReference type="Pfam" id="PF03618">
    <property type="entry name" value="Kinase-PPPase"/>
    <property type="match status" value="1"/>
</dbReference>
<dbReference type="SUPFAM" id="SSF47454">
    <property type="entry name" value="A DNA-binding domain in eukaryotic transcription factors"/>
    <property type="match status" value="1"/>
</dbReference>
<keyword id="KW-0418">Kinase</keyword>
<keyword id="KW-0547">Nucleotide-binding</keyword>
<keyword id="KW-0723">Serine/threonine-protein kinase</keyword>
<keyword id="KW-0808">Transferase</keyword>
<reference key="1">
    <citation type="submission" date="2008-02" db="EMBL/GenBank/DDBJ databases">
        <title>Complete sequence of Yersinia pseudotuberculosis YPIII.</title>
        <authorList>
            <consortium name="US DOE Joint Genome Institute"/>
            <person name="Copeland A."/>
            <person name="Lucas S."/>
            <person name="Lapidus A."/>
            <person name="Glavina del Rio T."/>
            <person name="Dalin E."/>
            <person name="Tice H."/>
            <person name="Bruce D."/>
            <person name="Goodwin L."/>
            <person name="Pitluck S."/>
            <person name="Munk A.C."/>
            <person name="Brettin T."/>
            <person name="Detter J.C."/>
            <person name="Han C."/>
            <person name="Tapia R."/>
            <person name="Schmutz J."/>
            <person name="Larimer F."/>
            <person name="Land M."/>
            <person name="Hauser L."/>
            <person name="Challacombe J.F."/>
            <person name="Green L."/>
            <person name="Lindler L.E."/>
            <person name="Nikolich M.P."/>
            <person name="Richardson P."/>
        </authorList>
    </citation>
    <scope>NUCLEOTIDE SEQUENCE [LARGE SCALE GENOMIC DNA]</scope>
    <source>
        <strain>YPIII</strain>
    </source>
</reference>
<sequence length="273" mass="30731">MERCVFYISDGTAITAEVLGHAVLSQFPINVTTFTLPFVENAARAQSVCKQINEIYQDTGVRPLVFYSIISLEVREIIQRSEGFCQDIVQALVAPLQGELGVPPQPVLNRTHGLTESNLDKYDARIAAIDYALAHDDGISLRNLDQAQVILLGVSRCGKTPTSLYLAMQFGIRAANYPFIADDMDNLQLPAALKPFQHKLFGLTINPERLAAIREERRENSRYASLRQCRMEVGEVEALFRKNQIRYLNSTNYSVEEISTKILDILGMSRRMF</sequence>
<evidence type="ECO:0000255" key="1">
    <source>
        <dbReference type="HAMAP-Rule" id="MF_01062"/>
    </source>
</evidence>
<organism>
    <name type="scientific">Yersinia pseudotuberculosis serotype O:3 (strain YPIII)</name>
    <dbReference type="NCBI Taxonomy" id="502800"/>
    <lineage>
        <taxon>Bacteria</taxon>
        <taxon>Pseudomonadati</taxon>
        <taxon>Pseudomonadota</taxon>
        <taxon>Gammaproteobacteria</taxon>
        <taxon>Enterobacterales</taxon>
        <taxon>Yersiniaceae</taxon>
        <taxon>Yersinia</taxon>
    </lineage>
</organism>
<proteinExistence type="inferred from homology"/>
<protein>
    <recommendedName>
        <fullName evidence="1">Putative phosphoenolpyruvate synthase regulatory protein</fullName>
        <shortName evidence="1">PEP synthase regulatory protein</shortName>
        <shortName evidence="1">PSRP</shortName>
        <ecNumber evidence="1">2.7.11.33</ecNumber>
        <ecNumber evidence="1">2.7.4.28</ecNumber>
    </recommendedName>
    <alternativeName>
        <fullName evidence="1">Pyruvate, water dikinase regulatory protein</fullName>
    </alternativeName>
</protein>
<gene>
    <name type="ordered locus">YPK_1842</name>
</gene>
<accession>B1JJ39</accession>